<protein>
    <recommendedName>
        <fullName evidence="1">DNA polymerase sliding clamp</fullName>
    </recommendedName>
    <alternativeName>
        <fullName evidence="1">Proliferating cell nuclear antigen homolog</fullName>
        <shortName evidence="1">PCNA</shortName>
    </alternativeName>
</protein>
<accession>Q9HN45</accession>
<keyword id="KW-0235">DNA replication</keyword>
<keyword id="KW-0238">DNA-binding</keyword>
<keyword id="KW-1185">Reference proteome</keyword>
<organism>
    <name type="scientific">Halobacterium salinarum (strain ATCC 700922 / JCM 11081 / NRC-1)</name>
    <name type="common">Halobacterium halobium</name>
    <dbReference type="NCBI Taxonomy" id="64091"/>
    <lineage>
        <taxon>Archaea</taxon>
        <taxon>Methanobacteriati</taxon>
        <taxon>Methanobacteriota</taxon>
        <taxon>Stenosarchaea group</taxon>
        <taxon>Halobacteria</taxon>
        <taxon>Halobacteriales</taxon>
        <taxon>Halobacteriaceae</taxon>
        <taxon>Halobacterium</taxon>
        <taxon>Halobacterium salinarum NRC-34001</taxon>
    </lineage>
</organism>
<reference key="1">
    <citation type="journal article" date="2000" name="Proc. Natl. Acad. Sci. U.S.A.">
        <title>Genome sequence of Halobacterium species NRC-1.</title>
        <authorList>
            <person name="Ng W.V."/>
            <person name="Kennedy S.P."/>
            <person name="Mahairas G.G."/>
            <person name="Berquist B."/>
            <person name="Pan M."/>
            <person name="Shukla H.D."/>
            <person name="Lasky S.R."/>
            <person name="Baliga N.S."/>
            <person name="Thorsson V."/>
            <person name="Sbrogna J."/>
            <person name="Swartzell S."/>
            <person name="Weir D."/>
            <person name="Hall J."/>
            <person name="Dahl T.A."/>
            <person name="Welti R."/>
            <person name="Goo Y.A."/>
            <person name="Leithauser B."/>
            <person name="Keller K."/>
            <person name="Cruz R."/>
            <person name="Danson M.J."/>
            <person name="Hough D.W."/>
            <person name="Maddocks D.G."/>
            <person name="Jablonski P.E."/>
            <person name="Krebs M.P."/>
            <person name="Angevine C.M."/>
            <person name="Dale H."/>
            <person name="Isenbarger T.A."/>
            <person name="Peck R.F."/>
            <person name="Pohlschroder M."/>
            <person name="Spudich J.L."/>
            <person name="Jung K.-H."/>
            <person name="Alam M."/>
            <person name="Freitas T."/>
            <person name="Hou S."/>
            <person name="Daniels C.J."/>
            <person name="Dennis P.P."/>
            <person name="Omer A.D."/>
            <person name="Ebhardt H."/>
            <person name="Lowe T.M."/>
            <person name="Liang P."/>
            <person name="Riley M."/>
            <person name="Hood L."/>
            <person name="DasSarma S."/>
        </authorList>
    </citation>
    <scope>NUCLEOTIDE SEQUENCE [LARGE SCALE GENOMIC DNA]</scope>
    <source>
        <strain>ATCC 700922 / JCM 11081 / NRC-1</strain>
    </source>
</reference>
<comment type="function">
    <text evidence="1">Sliding clamp subunit that acts as a moving platform for DNA processing. Responsible for tethering the catalytic subunit of DNA polymerase and other proteins to DNA during high-speed replication.</text>
</comment>
<comment type="subunit">
    <text evidence="1">Homotrimer. The subunits circularize to form a toroid; DNA passes through its center. Replication factor C (RFC) is required to load the toroid on the DNA.</text>
</comment>
<comment type="similarity">
    <text evidence="1">Belongs to the PCNA family.</text>
</comment>
<dbReference type="EMBL" id="AE004437">
    <property type="protein sequence ID" value="AAG20376.1"/>
    <property type="molecule type" value="Genomic_DNA"/>
</dbReference>
<dbReference type="PIR" id="D84376">
    <property type="entry name" value="D84376"/>
</dbReference>
<dbReference type="RefSeq" id="WP_010903677.1">
    <property type="nucleotide sequence ID" value="NC_002607.1"/>
</dbReference>
<dbReference type="SMR" id="Q9HN45"/>
<dbReference type="FunCoup" id="Q9HN45">
    <property type="interactions" value="151"/>
</dbReference>
<dbReference type="STRING" id="64091.VNG_2256G"/>
<dbReference type="PaxDb" id="64091-VNG_2256G"/>
<dbReference type="KEGG" id="hal:VNG_2256G"/>
<dbReference type="PATRIC" id="fig|64091.14.peg.1736"/>
<dbReference type="HOGENOM" id="CLU_043978_1_1_2"/>
<dbReference type="InParanoid" id="Q9HN45"/>
<dbReference type="OrthoDB" id="14749at2157"/>
<dbReference type="PhylomeDB" id="Q9HN45"/>
<dbReference type="Proteomes" id="UP000000554">
    <property type="component" value="Chromosome"/>
</dbReference>
<dbReference type="GO" id="GO:0003677">
    <property type="term" value="F:DNA binding"/>
    <property type="evidence" value="ECO:0007669"/>
    <property type="project" value="UniProtKB-UniRule"/>
</dbReference>
<dbReference type="GO" id="GO:0030337">
    <property type="term" value="F:DNA polymerase processivity factor activity"/>
    <property type="evidence" value="ECO:0000318"/>
    <property type="project" value="GO_Central"/>
</dbReference>
<dbReference type="GO" id="GO:0006272">
    <property type="term" value="P:leading strand elongation"/>
    <property type="evidence" value="ECO:0000318"/>
    <property type="project" value="GO_Central"/>
</dbReference>
<dbReference type="GO" id="GO:0006275">
    <property type="term" value="P:regulation of DNA replication"/>
    <property type="evidence" value="ECO:0007669"/>
    <property type="project" value="UniProtKB-UniRule"/>
</dbReference>
<dbReference type="CDD" id="cd00577">
    <property type="entry name" value="PCNA"/>
    <property type="match status" value="1"/>
</dbReference>
<dbReference type="Gene3D" id="3.70.10.10">
    <property type="match status" value="1"/>
</dbReference>
<dbReference type="HAMAP" id="MF_00317">
    <property type="entry name" value="DNApol_clamp_arch"/>
    <property type="match status" value="1"/>
</dbReference>
<dbReference type="InterPro" id="IPR046938">
    <property type="entry name" value="DNA_clamp_sf"/>
</dbReference>
<dbReference type="InterPro" id="IPR000730">
    <property type="entry name" value="Pr_cel_nuc_antig"/>
</dbReference>
<dbReference type="InterPro" id="IPR022649">
    <property type="entry name" value="Pr_cel_nuc_antig_C"/>
</dbReference>
<dbReference type="InterPro" id="IPR022659">
    <property type="entry name" value="Pr_cel_nuc_antig_CS"/>
</dbReference>
<dbReference type="InterPro" id="IPR022648">
    <property type="entry name" value="Pr_cel_nuc_antig_N"/>
</dbReference>
<dbReference type="NCBIfam" id="NF002222">
    <property type="entry name" value="PRK01115.1-5"/>
    <property type="match status" value="1"/>
</dbReference>
<dbReference type="PANTHER" id="PTHR11352">
    <property type="entry name" value="PROLIFERATING CELL NUCLEAR ANTIGEN"/>
    <property type="match status" value="1"/>
</dbReference>
<dbReference type="PANTHER" id="PTHR11352:SF0">
    <property type="entry name" value="PROLIFERATING CELL NUCLEAR ANTIGEN"/>
    <property type="match status" value="1"/>
</dbReference>
<dbReference type="Pfam" id="PF02747">
    <property type="entry name" value="PCNA_C"/>
    <property type="match status" value="1"/>
</dbReference>
<dbReference type="Pfam" id="PF00705">
    <property type="entry name" value="PCNA_N"/>
    <property type="match status" value="1"/>
</dbReference>
<dbReference type="PRINTS" id="PR00339">
    <property type="entry name" value="PCNACYCLIN"/>
</dbReference>
<dbReference type="SUPFAM" id="SSF55979">
    <property type="entry name" value="DNA clamp"/>
    <property type="match status" value="1"/>
</dbReference>
<dbReference type="PROSITE" id="PS01251">
    <property type="entry name" value="PCNA_1"/>
    <property type="match status" value="1"/>
</dbReference>
<sequence length="247" mass="26824">MFKAIVSADTLQETLDSVSVLVDECKIHLDDDTLSIRAVDPASVGMVDLDLAATAFESYEADGGLIGVNLSRLEDIAGMADAGQLIQLELDEETRKLHIQIDGLEYTLALIDPDSIRQEPDIPDLDLPAHVAIEGRDIDRAVTAADMVSDHIALGVDTGDDLFYVNAEGDTDDVHLELAPDQLIDLDAGDAHSLFSLDYLKDMNKAIPTTAEVELELGDEFPIKLHFDIADAQGHVTYMLAPRIQSN</sequence>
<name>PCNA_HALSA</name>
<gene>
    <name evidence="1" type="primary">pcn</name>
    <name type="ordered locus">VNG_2256G</name>
</gene>
<proteinExistence type="inferred from homology"/>
<feature type="chain" id="PRO_0000149194" description="DNA polymerase sliding clamp">
    <location>
        <begin position="1"/>
        <end position="247"/>
    </location>
</feature>
<evidence type="ECO:0000255" key="1">
    <source>
        <dbReference type="HAMAP-Rule" id="MF_00317"/>
    </source>
</evidence>